<comment type="function">
    <text evidence="1">Catalyzes the transfer of the 2-phospholactate moiety from (2S)-lactyl-2-diphospho-5'-guanosine to 7,8-didemethyl-8-hydroxy-5-deazariboflavin (FO) with the formation of oxidized coenzyme F420-0 and GMP.</text>
</comment>
<comment type="catalytic activity">
    <reaction evidence="1">
        <text>(2S)-lactyl-2-diphospho-5'-guanosine + 7,8-didemethyl-8-hydroxy-5-deazariboflavin = oxidized coenzyme F420-0 + GMP + H(+)</text>
        <dbReference type="Rhea" id="RHEA:63444"/>
        <dbReference type="ChEBI" id="CHEBI:15378"/>
        <dbReference type="ChEBI" id="CHEBI:58115"/>
        <dbReference type="ChEBI" id="CHEBI:59435"/>
        <dbReference type="ChEBI" id="CHEBI:59904"/>
        <dbReference type="ChEBI" id="CHEBI:59907"/>
        <dbReference type="EC" id="2.7.8.28"/>
    </reaction>
</comment>
<comment type="cofactor">
    <cofactor evidence="1">
        <name>Mg(2+)</name>
        <dbReference type="ChEBI" id="CHEBI:18420"/>
    </cofactor>
</comment>
<comment type="pathway">
    <text evidence="1">Cofactor biosynthesis; coenzyme F420 biosynthesis.</text>
</comment>
<comment type="subunit">
    <text evidence="1">Homodimer.</text>
</comment>
<comment type="similarity">
    <text evidence="1">Belongs to the CofD family.</text>
</comment>
<dbReference type="EC" id="2.7.8.28" evidence="1"/>
<dbReference type="EMBL" id="CP000745">
    <property type="protein sequence ID" value="ABR66465.1"/>
    <property type="molecule type" value="Genomic_DNA"/>
</dbReference>
<dbReference type="SMR" id="A6VJ39"/>
<dbReference type="STRING" id="426368.MmarC7_1402"/>
<dbReference type="KEGG" id="mmz:MmarC7_1402"/>
<dbReference type="eggNOG" id="arCOG04395">
    <property type="taxonomic scope" value="Archaea"/>
</dbReference>
<dbReference type="HOGENOM" id="CLU_055795_1_0_2"/>
<dbReference type="OrthoDB" id="59563at2157"/>
<dbReference type="UniPathway" id="UPA00071"/>
<dbReference type="GO" id="GO:0043743">
    <property type="term" value="F:LPPG:FO 2-phospho-L-lactate transferase activity"/>
    <property type="evidence" value="ECO:0007669"/>
    <property type="project" value="UniProtKB-EC"/>
</dbReference>
<dbReference type="GO" id="GO:0000287">
    <property type="term" value="F:magnesium ion binding"/>
    <property type="evidence" value="ECO:0007669"/>
    <property type="project" value="InterPro"/>
</dbReference>
<dbReference type="GO" id="GO:0052645">
    <property type="term" value="P:F420-0 metabolic process"/>
    <property type="evidence" value="ECO:0007669"/>
    <property type="project" value="UniProtKB-UniRule"/>
</dbReference>
<dbReference type="CDD" id="cd07186">
    <property type="entry name" value="CofD_like"/>
    <property type="match status" value="1"/>
</dbReference>
<dbReference type="Gene3D" id="1.10.8.240">
    <property type="entry name" value="CofD-like domain"/>
    <property type="match status" value="1"/>
</dbReference>
<dbReference type="Gene3D" id="3.40.50.10680">
    <property type="entry name" value="CofD-like domains"/>
    <property type="match status" value="1"/>
</dbReference>
<dbReference type="HAMAP" id="MF_01257">
    <property type="entry name" value="CofD"/>
    <property type="match status" value="1"/>
</dbReference>
<dbReference type="InterPro" id="IPR002882">
    <property type="entry name" value="CofD"/>
</dbReference>
<dbReference type="InterPro" id="IPR038136">
    <property type="entry name" value="CofD-like_dom_sf"/>
</dbReference>
<dbReference type="InterPro" id="IPR010115">
    <property type="entry name" value="FbiA/CofD"/>
</dbReference>
<dbReference type="NCBIfam" id="TIGR01819">
    <property type="entry name" value="F420_cofD"/>
    <property type="match status" value="1"/>
</dbReference>
<dbReference type="PANTHER" id="PTHR43007">
    <property type="entry name" value="2-PHOSPHO-L-LACTATE TRANSFERASE"/>
    <property type="match status" value="1"/>
</dbReference>
<dbReference type="PANTHER" id="PTHR43007:SF1">
    <property type="entry name" value="2-PHOSPHO-L-LACTATE TRANSFERASE"/>
    <property type="match status" value="1"/>
</dbReference>
<dbReference type="Pfam" id="PF01933">
    <property type="entry name" value="CofD"/>
    <property type="match status" value="1"/>
</dbReference>
<dbReference type="SUPFAM" id="SSF142338">
    <property type="entry name" value="CofD-like"/>
    <property type="match status" value="1"/>
</dbReference>
<organism>
    <name type="scientific">Methanococcus maripaludis (strain C7 / ATCC BAA-1331)</name>
    <dbReference type="NCBI Taxonomy" id="426368"/>
    <lineage>
        <taxon>Archaea</taxon>
        <taxon>Methanobacteriati</taxon>
        <taxon>Methanobacteriota</taxon>
        <taxon>Methanomada group</taxon>
        <taxon>Methanococci</taxon>
        <taxon>Methanococcales</taxon>
        <taxon>Methanococcaceae</taxon>
        <taxon>Methanococcus</taxon>
    </lineage>
</organism>
<accession>A6VJ39</accession>
<reference key="1">
    <citation type="submission" date="2007-06" db="EMBL/GenBank/DDBJ databases">
        <title>Complete sequence of Methanococcus maripaludis C7.</title>
        <authorList>
            <consortium name="US DOE Joint Genome Institute"/>
            <person name="Copeland A."/>
            <person name="Lucas S."/>
            <person name="Lapidus A."/>
            <person name="Barry K."/>
            <person name="Glavina del Rio T."/>
            <person name="Dalin E."/>
            <person name="Tice H."/>
            <person name="Pitluck S."/>
            <person name="Clum A."/>
            <person name="Schmutz J."/>
            <person name="Larimer F."/>
            <person name="Land M."/>
            <person name="Hauser L."/>
            <person name="Kyrpides N."/>
            <person name="Anderson I."/>
            <person name="Sieprawska-Lupa M."/>
            <person name="Whitman W.B."/>
            <person name="Richardson P."/>
        </authorList>
    </citation>
    <scope>NUCLEOTIDE SEQUENCE [LARGE SCALE GENOMIC DNA]</scope>
    <source>
        <strain>C7 / ATCC BAA-1331</strain>
    </source>
</reference>
<gene>
    <name evidence="1" type="primary">cofD</name>
    <name type="ordered locus">MmarC7_1402</name>
</gene>
<evidence type="ECO:0000255" key="1">
    <source>
        <dbReference type="HAMAP-Rule" id="MF_01257"/>
    </source>
</evidence>
<proteinExistence type="inferred from homology"/>
<name>COFD_METM7</name>
<keyword id="KW-0460">Magnesium</keyword>
<keyword id="KW-0808">Transferase</keyword>
<feature type="chain" id="PRO_1000067247" description="2-phospho-L-lactate transferase">
    <location>
        <begin position="1"/>
        <end position="309"/>
    </location>
</feature>
<feature type="binding site" evidence="1">
    <location>
        <position position="50"/>
    </location>
    <ligand>
        <name>7,8-didemethyl-8-hydroxy-5-deazariboflavin</name>
        <dbReference type="ChEBI" id="CHEBI:59904"/>
    </ligand>
</feature>
<feature type="binding site" evidence="1">
    <location>
        <position position="89"/>
    </location>
    <ligand>
        <name>7,8-didemethyl-8-hydroxy-5-deazariboflavin</name>
        <dbReference type="ChEBI" id="CHEBI:59904"/>
    </ligand>
</feature>
<protein>
    <recommendedName>
        <fullName evidence="1">2-phospho-L-lactate transferase</fullName>
        <ecNumber evidence="1">2.7.8.28</ecNumber>
    </recommendedName>
</protein>
<sequence>MKITILSGGTGTPKLIQGFKEILPNEDISVIVNTGEDTYIGDIYLSPDIDTVLYTFSDLINDETWYGLKGDTFFCHEQLKNFGFDEVLKIGDKDRALKMHKASSLKNGVKMSEIVDIERKSLLINSKIYPMSNEKVESKVLIEENNEKILLKFHDFWIFRKGNAKVLDIFYENSNYAKAANGVLKAIHESDFVLIGPSNPITSIGPILSISEIKNALKEKLVFAVSPIVGENPVSGPAGTLMNAKGYPVSAVGVYEYYKDIVDVLVLDNSDINKKKDINCEVLYANTIMKTIDDKINLARNILDYYKSR</sequence>